<accession>P80347</accession>
<reference key="1">
    <citation type="journal article" date="1994" name="Eur. J. Biochem.">
        <title>Purification and partial amino acid sequence of fuctinin, an endogenous inhibitor of fucosyltransferase activities.</title>
        <authorList>
            <person name="Ruggiero-Lopez D."/>
            <person name="Manioc C."/>
            <person name="Geourjon C."/>
            <person name="Louisot P."/>
            <person name="Martin A."/>
        </authorList>
    </citation>
    <scope>PROTEIN SEQUENCE</scope>
    <source>
        <strain>Sprague-Dawley</strain>
        <tissue>Small intestine mucosa</tissue>
    </source>
</reference>
<proteinExistence type="evidence at protein level"/>
<sequence length="22" mass="2393">SASPGLPKGEKEQQEAIEHIDE</sequence>
<feature type="chain" id="PRO_0000087377" description="Fuctinin-1">
    <location>
        <begin position="1"/>
        <end position="22" status="greater than"/>
    </location>
</feature>
<feature type="region of interest" description="Disordered" evidence="1">
    <location>
        <begin position="1"/>
        <end position="22"/>
    </location>
</feature>
<feature type="compositionally biased region" description="Basic and acidic residues" evidence="1">
    <location>
        <begin position="8"/>
        <end position="22"/>
    </location>
</feature>
<feature type="non-terminal residue">
    <location>
        <position position="22"/>
    </location>
</feature>
<protein>
    <recommendedName>
        <fullName>Fuctinin-1</fullName>
    </recommendedName>
    <alternativeName>
        <fullName>Fucosyltransferase inhibitor 1</fullName>
    </alternativeName>
</protein>
<evidence type="ECO:0000256" key="1">
    <source>
        <dbReference type="SAM" id="MobiDB-lite"/>
    </source>
</evidence>
<evidence type="ECO:0000305" key="2"/>
<keyword id="KW-0963">Cytoplasm</keyword>
<keyword id="KW-0903">Direct protein sequencing</keyword>
<keyword id="KW-1185">Reference proteome</keyword>
<comment type="function">
    <text>Has a role in the physiological regulation of fucosylation processes.</text>
</comment>
<comment type="subunit">
    <text>Oligomer.</text>
</comment>
<comment type="subcellular location">
    <subcellularLocation>
        <location>Cytoplasm</location>
    </subcellularLocation>
</comment>
<comment type="similarity">
    <text evidence="2">To human SET/PHAPII protein.</text>
</comment>
<dbReference type="PIR" id="S48196">
    <property type="entry name" value="S48196"/>
</dbReference>
<dbReference type="iPTMnet" id="P80347"/>
<dbReference type="PhosphoSitePlus" id="P80347"/>
<dbReference type="RGD" id="1562760">
    <property type="gene designation" value="RGD1562760"/>
</dbReference>
<dbReference type="InParanoid" id="P80347"/>
<dbReference type="Proteomes" id="UP000002494">
    <property type="component" value="Unplaced"/>
</dbReference>
<dbReference type="GO" id="GO:0005737">
    <property type="term" value="C:cytoplasm"/>
    <property type="evidence" value="ECO:0007669"/>
    <property type="project" value="UniProtKB-SubCell"/>
</dbReference>
<organism>
    <name type="scientific">Rattus norvegicus</name>
    <name type="common">Rat</name>
    <dbReference type="NCBI Taxonomy" id="10116"/>
    <lineage>
        <taxon>Eukaryota</taxon>
        <taxon>Metazoa</taxon>
        <taxon>Chordata</taxon>
        <taxon>Craniata</taxon>
        <taxon>Vertebrata</taxon>
        <taxon>Euteleostomi</taxon>
        <taxon>Mammalia</taxon>
        <taxon>Eutheria</taxon>
        <taxon>Euarchontoglires</taxon>
        <taxon>Glires</taxon>
        <taxon>Rodentia</taxon>
        <taxon>Myomorpha</taxon>
        <taxon>Muroidea</taxon>
        <taxon>Muridae</taxon>
        <taxon>Murinae</taxon>
        <taxon>Rattus</taxon>
    </lineage>
</organism>
<name>FUC1_RAT</name>